<protein>
    <recommendedName>
        <fullName evidence="6">EPD1-interacting receptor-like cytoplasmic serine/threonine-protein kinase</fullName>
        <shortName evidence="6">NbEIR</shortName>
        <ecNumber evidence="4">2.7.11.1</ecNumber>
    </recommendedName>
</protein>
<name>EIR_NICBE</name>
<feature type="chain" id="PRO_0000462492" description="EPD1-interacting receptor-like cytoplasmic serine/threonine-protein kinase">
    <location>
        <begin position="1"/>
        <end position="463"/>
    </location>
</feature>
<feature type="domain" description="Protein kinase" evidence="3">
    <location>
        <begin position="91"/>
        <end position="383"/>
    </location>
</feature>
<feature type="active site" description="Proton acceptor" evidence="3 4">
    <location>
        <position position="221"/>
    </location>
</feature>
<feature type="binding site" evidence="3">
    <location>
        <begin position="97"/>
        <end position="105"/>
    </location>
    <ligand>
        <name>ATP</name>
        <dbReference type="ChEBI" id="CHEBI:30616"/>
    </ligand>
</feature>
<feature type="binding site" evidence="3">
    <location>
        <position position="126"/>
    </location>
    <ligand>
        <name>ATP</name>
        <dbReference type="ChEBI" id="CHEBI:30616"/>
    </ligand>
</feature>
<feature type="modified residue" description="Phosphotyrosine" evidence="1">
    <location>
        <position position="171"/>
    </location>
</feature>
<feature type="modified residue" description="Phosphotyrosine" evidence="1">
    <location>
        <position position="173"/>
    </location>
</feature>
<comment type="function">
    <text evidence="5">Required for pathogen-associated molecular pattern (PAMP, e.g. chitin and flg22)-triggered immunity (PTI) involving reactive oxygen species (ROS) accumulation and triggering plant defense, including defense-related gene expression (e.g. PR1 and LOX) (PubMed:39488762). Ensures specific recognition of the EPD1 effector of Verticillium dahliae, resulting in a hypersensitive response known as effector-triggered immunity (ETI), characterized by the activation of programmed cell death to limit infection by the pathogen (PubMed:39488762). Priming plants with the incompatible pathogen V.dahliae leads to an increased resistance to both the broad-host-range filamentous pathogen Botrytis cinerea and the semibiotrophic pathogen Phytophthora capsici, as a result of systemic acquired resistance (SAR) (PubMed:39488762).</text>
</comment>
<comment type="catalytic activity">
    <reaction evidence="4">
        <text>L-seryl-[protein] + ATP = O-phospho-L-seryl-[protein] + ADP + H(+)</text>
        <dbReference type="Rhea" id="RHEA:17989"/>
        <dbReference type="Rhea" id="RHEA-COMP:9863"/>
        <dbReference type="Rhea" id="RHEA-COMP:11604"/>
        <dbReference type="ChEBI" id="CHEBI:15378"/>
        <dbReference type="ChEBI" id="CHEBI:29999"/>
        <dbReference type="ChEBI" id="CHEBI:30616"/>
        <dbReference type="ChEBI" id="CHEBI:83421"/>
        <dbReference type="ChEBI" id="CHEBI:456216"/>
        <dbReference type="EC" id="2.7.11.1"/>
    </reaction>
</comment>
<comment type="catalytic activity">
    <reaction evidence="4">
        <text>L-threonyl-[protein] + ATP = O-phospho-L-threonyl-[protein] + ADP + H(+)</text>
        <dbReference type="Rhea" id="RHEA:46608"/>
        <dbReference type="Rhea" id="RHEA-COMP:11060"/>
        <dbReference type="Rhea" id="RHEA-COMP:11605"/>
        <dbReference type="ChEBI" id="CHEBI:15378"/>
        <dbReference type="ChEBI" id="CHEBI:30013"/>
        <dbReference type="ChEBI" id="CHEBI:30616"/>
        <dbReference type="ChEBI" id="CHEBI:61977"/>
        <dbReference type="ChEBI" id="CHEBI:456216"/>
        <dbReference type="EC" id="2.7.11.1"/>
    </reaction>
</comment>
<comment type="subunit">
    <text evidence="5">Interacts with the V.dahliae elicitor EPD1 (AC G2WWH6).</text>
</comment>
<comment type="subcellular location">
    <subcellularLocation>
        <location evidence="2">Cell membrane</location>
    </subcellularLocation>
</comment>
<comment type="induction">
    <text evidence="5">Induced by the V.dahliae elicitor EPD1 (AC G2WWH6).</text>
</comment>
<comment type="PTM">
    <text evidence="1">Phosphorylated at Tyr-171 and Tyr-173 in the presence of pathogen-associated molecular patterns (PAMPs); this triggers the expression of pathogenesis-related genes.</text>
</comment>
<comment type="similarity">
    <text evidence="3">Belongs to the protein kinase superfamily. Ser/Thr protein kinase family.</text>
</comment>
<organism>
    <name type="scientific">Nicotiana benthamiana</name>
    <dbReference type="NCBI Taxonomy" id="4100"/>
    <lineage>
        <taxon>Eukaryota</taxon>
        <taxon>Viridiplantae</taxon>
        <taxon>Streptophyta</taxon>
        <taxon>Embryophyta</taxon>
        <taxon>Tracheophyta</taxon>
        <taxon>Spermatophyta</taxon>
        <taxon>Magnoliopsida</taxon>
        <taxon>eudicotyledons</taxon>
        <taxon>Gunneridae</taxon>
        <taxon>Pentapetalae</taxon>
        <taxon>asterids</taxon>
        <taxon>lamiids</taxon>
        <taxon>Solanales</taxon>
        <taxon>Solanaceae</taxon>
        <taxon>Nicotianoideae</taxon>
        <taxon>Nicotianeae</taxon>
        <taxon>Nicotiana</taxon>
    </lineage>
</organism>
<proteinExistence type="evidence at protein level"/>
<gene>
    <name evidence="6" type="primary">EIR</name>
    <name evidence="6" type="ORF">NbS00058880g0009</name>
</gene>
<accession>P0DXJ0</accession>
<keyword id="KW-0067">ATP-binding</keyword>
<keyword id="KW-1003">Cell membrane</keyword>
<keyword id="KW-0928">Hypersensitive response elicitation</keyword>
<keyword id="KW-0418">Kinase</keyword>
<keyword id="KW-0472">Membrane</keyword>
<keyword id="KW-0547">Nucleotide-binding</keyword>
<keyword id="KW-0597">Phosphoprotein</keyword>
<keyword id="KW-0611">Plant defense</keyword>
<keyword id="KW-0723">Serine/threonine-protein kinase</keyword>
<keyword id="KW-0808">Transferase</keyword>
<dbReference type="EC" id="2.7.11.1" evidence="4"/>
<dbReference type="PROSITE" id="PS50011">
    <property type="entry name" value="PROTEIN_KINASE_DOM"/>
    <property type="match status" value="1"/>
</dbReference>
<dbReference type="PROSITE" id="PS00108">
    <property type="entry name" value="PROTEIN_KINASE_ST"/>
    <property type="match status" value="1"/>
</dbReference>
<reference key="1">
    <citation type="journal article" date="2025" name="Adv. Sci.">
        <title>Recognition of a fungal effector potentiates pathogen-associated molecular pattern-triggered immunity in cotton.</title>
        <authorList>
            <person name="Sun L."/>
            <person name="Li X."/>
            <person name="Zhong J."/>
            <person name="Wang Y."/>
            <person name="Li B."/>
            <person name="Ye Z."/>
            <person name="Zhang J."/>
        </authorList>
    </citation>
    <scope>NUCLEOTIDE SEQUENCE [MRNA]</scope>
    <scope>FUNCTION</scope>
    <scope>INTERACTION WITH V.DAHLIAE EPD1</scope>
    <scope>INDUCTION BY V.DAHLIAE EPD1</scope>
</reference>
<sequence>MVASKIAWKFILPNCFKAKNDRNILPSETKIIQICKQINSDHHHSRLAISDISTDSRSVFISLDDLSSNAIIGSNLHIFTYAELKIITSKFSSANFLGKGGFGPVHKGFIDDKIKPGLKAQPVAVKLLDLDGNQGHQEWLTEVVFLGQLRHPHLVKLIGYCWEEEQRLLVYEYMARGNLENHLFSRYSSCLPWSTRIKIAVGAAKGLAFLHGEEKPVIYRDFKASNILLDSDYKAKLSDFGLAKDGPEGDDTHVSTRVMGTHGYAAPEYIMTGHLTSKSDVYSFGVVLLELITGRPAMDKNRPIRERNLVDWARPMLRDFHKLDRIMDPRLEGQYSTEGAKKVAALAYQCLSHQPRSRPTMSNVVKSLEPISELTDIPIGPFVYVVPSSECDKELEIGALKSKLDEEKKMNVNEDEQKGARRHGHRHKHRPKSSAAAAAVYSDTHMQNFALSHERTNKKHILK</sequence>
<evidence type="ECO:0000250" key="1">
    <source>
        <dbReference type="UniProtKB" id="A0A5J5T2N2"/>
    </source>
</evidence>
<evidence type="ECO:0000250" key="2">
    <source>
        <dbReference type="UniProtKB" id="Q9ZUF4"/>
    </source>
</evidence>
<evidence type="ECO:0000255" key="3">
    <source>
        <dbReference type="PROSITE-ProRule" id="PRU00159"/>
    </source>
</evidence>
<evidence type="ECO:0000255" key="4">
    <source>
        <dbReference type="PROSITE-ProRule" id="PRU10027"/>
    </source>
</evidence>
<evidence type="ECO:0000269" key="5">
    <source>
    </source>
</evidence>
<evidence type="ECO:0000303" key="6">
    <source>
    </source>
</evidence>